<gene>
    <name evidence="5" type="primary">TBC1D3L</name>
    <name type="synonym">PRC17</name>
</gene>
<evidence type="ECO:0000250" key="1">
    <source>
        <dbReference type="UniProtKB" id="Q8IZP1"/>
    </source>
</evidence>
<evidence type="ECO:0000255" key="2">
    <source>
        <dbReference type="PROSITE-ProRule" id="PRU00163"/>
    </source>
</evidence>
<evidence type="ECO:0000256" key="3">
    <source>
        <dbReference type="SAM" id="MobiDB-lite"/>
    </source>
</evidence>
<evidence type="ECO:0000305" key="4"/>
<evidence type="ECO:0000312" key="5">
    <source>
        <dbReference type="HGNC" id="HGNC:51246"/>
    </source>
</evidence>
<proteinExistence type="evidence at transcript level"/>
<name>TBC3L_HUMAN</name>
<protein>
    <recommendedName>
        <fullName evidence="5">TBC1 domain family member 3L</fullName>
    </recommendedName>
</protein>
<sequence>MDVVEVAGSWWAQEREDIIMKYEKGHRAGLPEDKGPKPFRSYNNNVDHLGIVHETELPPLTAREAKQIRREISRKSKWVDMLGDWEKYKSSRKLIDRAYKGMPMNIRGPMWSVLLNTEEMKLKNPGRYQIMKEKGKRSSEHIQRIDRDVSGTLRKHIFFRDRYGTKQRELLHILLAYEEYNPEVGYCRDLSHIAALFLLYLPEEDAFWALVQLLASERHSLQGFHSPNGGTVQGLQDQQEHVVATSQPKTMGHQDKKDLCGQCSPLGCLIRILIDGISLGLTLRLWDVYLVEGEQALMPITRIAFKVQQKRLTKTSRCGPWARFCNRFVDTWARDEDTVLKHLRASMKKLTRKQGDLQPPAKPEQGSSASRPVPASRGGKTLCKGDRQAPPGPPARFPRPIWSASPPRAPRSSTPCPGGAVREDTYPVGTQGVPSPALAQGGPQGSWRFLQWNSMPRLPTDLDVEGPWFRHYDFRQSCWVRAISQEDQLAPCWQAEHPAERVRSAFAAPSTDSDQGTPFRARDEQPCAPTSGPCLCGLHLESSQFPPGF</sequence>
<dbReference type="EMBL" id="AB449884">
    <property type="protein sequence ID" value="BAH16627.1"/>
    <property type="molecule type" value="mRNA"/>
</dbReference>
<dbReference type="EMBL" id="AC233968">
    <property type="status" value="NOT_ANNOTATED_CDS"/>
    <property type="molecule type" value="Genomic_DNA"/>
</dbReference>
<dbReference type="EMBL" id="AC243569">
    <property type="status" value="NOT_ANNOTATED_CDS"/>
    <property type="molecule type" value="Genomic_DNA"/>
</dbReference>
<dbReference type="CCDS" id="CCDS74043.1"/>
<dbReference type="RefSeq" id="NP_001278388.1">
    <property type="nucleotide sequence ID" value="NM_001291459.2"/>
</dbReference>
<dbReference type="RefSeq" id="NP_001356429.1">
    <property type="nucleotide sequence ID" value="NM_001369500.1"/>
</dbReference>
<dbReference type="SMR" id="B9A6J9"/>
<dbReference type="FunCoup" id="B9A6J9">
    <property type="interactions" value="68"/>
</dbReference>
<dbReference type="BioMuta" id="TBC1D3L"/>
<dbReference type="jPOST" id="B9A6J9"/>
<dbReference type="MassIVE" id="B9A6J9"/>
<dbReference type="PaxDb" id="9606-ENSP00000481508"/>
<dbReference type="PeptideAtlas" id="B9A6J9"/>
<dbReference type="Antibodypedia" id="77508">
    <property type="antibodies" value="2 antibodies from 2 providers"/>
</dbReference>
<dbReference type="DNASU" id="101060376"/>
<dbReference type="Ensembl" id="ENST00000612727.5">
    <property type="protein sequence ID" value="ENSP00000481508.1"/>
    <property type="gene ID" value="ENSG00000274512.6"/>
</dbReference>
<dbReference type="Ensembl" id="ENST00000617678.2">
    <property type="protein sequence ID" value="ENSP00000479577.1"/>
    <property type="gene ID" value="ENSG00000274512.6"/>
</dbReference>
<dbReference type="GeneID" id="101060376"/>
<dbReference type="KEGG" id="hsa:101060376"/>
<dbReference type="MANE-Select" id="ENST00000612727.5">
    <property type="protein sequence ID" value="ENSP00000481508.1"/>
    <property type="RefSeq nucleotide sequence ID" value="NM_001369500.1"/>
    <property type="RefSeq protein sequence ID" value="NP_001356429.1"/>
</dbReference>
<dbReference type="UCSC" id="uc002hpp.3">
    <property type="organism name" value="human"/>
</dbReference>
<dbReference type="AGR" id="HGNC:51246"/>
<dbReference type="CTD" id="101060376"/>
<dbReference type="GeneCards" id="TBC1D3L"/>
<dbReference type="HGNC" id="HGNC:51246">
    <property type="gene designation" value="TBC1D3L"/>
</dbReference>
<dbReference type="HPA" id="ENSG00000274512">
    <property type="expression patterns" value="Low tissue specificity"/>
</dbReference>
<dbReference type="neXtProt" id="NX_B9A6J9"/>
<dbReference type="OpenTargets" id="ENSG00000274512"/>
<dbReference type="VEuPathDB" id="HostDB:ENSG00000274512"/>
<dbReference type="eggNOG" id="KOG1102">
    <property type="taxonomic scope" value="Eukaryota"/>
</dbReference>
<dbReference type="GeneTree" id="ENSGT00940000163624"/>
<dbReference type="HOGENOM" id="CLU_005350_10_5_1"/>
<dbReference type="InParanoid" id="B9A6J9"/>
<dbReference type="OMA" id="HNVDMDF"/>
<dbReference type="OrthoDB" id="9535050at2759"/>
<dbReference type="PAN-GO" id="B9A6J9">
    <property type="GO annotations" value="2 GO annotations based on evolutionary models"/>
</dbReference>
<dbReference type="BioGRID-ORCS" id="101060376">
    <property type="hits" value="9 hits in 121 CRISPR screens"/>
</dbReference>
<dbReference type="ChiTaRS" id="TBC1D3L">
    <property type="organism name" value="human"/>
</dbReference>
<dbReference type="GenomeRNAi" id="101060376"/>
<dbReference type="Pharos" id="B9A6J9">
    <property type="development level" value="Tdark"/>
</dbReference>
<dbReference type="PRO" id="PR:B9A6J9"/>
<dbReference type="Proteomes" id="UP000005640">
    <property type="component" value="Chromosome 17"/>
</dbReference>
<dbReference type="RNAct" id="B9A6J9">
    <property type="molecule type" value="protein"/>
</dbReference>
<dbReference type="Bgee" id="ENSG00000274512">
    <property type="expression patterns" value="Expressed in lower esophagus mucosa and 96 other cell types or tissues"/>
</dbReference>
<dbReference type="GO" id="GO:0005886">
    <property type="term" value="C:plasma membrane"/>
    <property type="evidence" value="ECO:0007669"/>
    <property type="project" value="UniProtKB-SubCell"/>
</dbReference>
<dbReference type="GO" id="GO:0005096">
    <property type="term" value="F:GTPase activator activity"/>
    <property type="evidence" value="ECO:0000318"/>
    <property type="project" value="GO_Central"/>
</dbReference>
<dbReference type="FunFam" id="1.10.10.750:FF:000001">
    <property type="entry name" value="TBC1 domain family member 10A"/>
    <property type="match status" value="1"/>
</dbReference>
<dbReference type="FunFam" id="1.10.8.270:FF:000016">
    <property type="entry name" value="TBC1 domain family member 2A"/>
    <property type="match status" value="1"/>
</dbReference>
<dbReference type="FunFam" id="1.10.472.80:FF:000058">
    <property type="entry name" value="Ubiquitin specific peptidase 6"/>
    <property type="match status" value="1"/>
</dbReference>
<dbReference type="Gene3D" id="1.10.8.270">
    <property type="entry name" value="putative rabgap domain of human tbc1 domain family member 14 like domains"/>
    <property type="match status" value="1"/>
</dbReference>
<dbReference type="Gene3D" id="1.10.10.750">
    <property type="entry name" value="Ypt/Rab-GAP domain of gyp1p, domain 1"/>
    <property type="match status" value="1"/>
</dbReference>
<dbReference type="Gene3D" id="1.10.472.80">
    <property type="entry name" value="Ypt/Rab-GAP domain of gyp1p, domain 3"/>
    <property type="match status" value="1"/>
</dbReference>
<dbReference type="InterPro" id="IPR000195">
    <property type="entry name" value="Rab-GAP-TBC_dom"/>
</dbReference>
<dbReference type="InterPro" id="IPR035969">
    <property type="entry name" value="Rab-GAP_TBC_sf"/>
</dbReference>
<dbReference type="InterPro" id="IPR050302">
    <property type="entry name" value="Rab_GAP_TBC_domain"/>
</dbReference>
<dbReference type="PANTHER" id="PTHR47219">
    <property type="entry name" value="RAB GTPASE-ACTIVATING PROTEIN 1-LIKE"/>
    <property type="match status" value="1"/>
</dbReference>
<dbReference type="PANTHER" id="PTHR47219:SF25">
    <property type="entry name" value="RAB-GAP TBC DOMAIN-CONTAINING PROTEIN"/>
    <property type="match status" value="1"/>
</dbReference>
<dbReference type="Pfam" id="PF00566">
    <property type="entry name" value="RabGAP-TBC"/>
    <property type="match status" value="1"/>
</dbReference>
<dbReference type="SMART" id="SM00164">
    <property type="entry name" value="TBC"/>
    <property type="match status" value="1"/>
</dbReference>
<dbReference type="SUPFAM" id="SSF47923">
    <property type="entry name" value="Ypt/Rab-GAP domain of gyp1p"/>
    <property type="match status" value="1"/>
</dbReference>
<dbReference type="PROSITE" id="PS50086">
    <property type="entry name" value="TBC_RABGAP"/>
    <property type="match status" value="1"/>
</dbReference>
<organism>
    <name type="scientific">Homo sapiens</name>
    <name type="common">Human</name>
    <dbReference type="NCBI Taxonomy" id="9606"/>
    <lineage>
        <taxon>Eukaryota</taxon>
        <taxon>Metazoa</taxon>
        <taxon>Chordata</taxon>
        <taxon>Craniata</taxon>
        <taxon>Vertebrata</taxon>
        <taxon>Euteleostomi</taxon>
        <taxon>Mammalia</taxon>
        <taxon>Eutheria</taxon>
        <taxon>Euarchontoglires</taxon>
        <taxon>Primates</taxon>
        <taxon>Haplorrhini</taxon>
        <taxon>Catarrhini</taxon>
        <taxon>Hominidae</taxon>
        <taxon>Homo</taxon>
    </lineage>
</organism>
<feature type="chain" id="PRO_0000431608" description="TBC1 domain family member 3L">
    <location>
        <begin position="1"/>
        <end position="549"/>
    </location>
</feature>
<feature type="domain" description="Rab-GAP TBC" evidence="2">
    <location>
        <begin position="101"/>
        <end position="293"/>
    </location>
</feature>
<feature type="region of interest" description="Disordered" evidence="3">
    <location>
        <begin position="350"/>
        <end position="423"/>
    </location>
</feature>
<feature type="compositionally biased region" description="Low complexity" evidence="3">
    <location>
        <begin position="398"/>
        <end position="417"/>
    </location>
</feature>
<feature type="lipid moiety-binding region" description="S-palmitoyl cysteine" evidence="1">
    <location>
        <position position="318"/>
    </location>
</feature>
<feature type="lipid moiety-binding region" description="S-palmitoyl cysteine" evidence="1">
    <location>
        <position position="325"/>
    </location>
</feature>
<comment type="function">
    <text evidence="1">Acts as a GTPase activating protein for RAB5. Does not act on RAB4 or RAB11 (By similarity).</text>
</comment>
<comment type="subcellular location">
    <subcellularLocation>
        <location evidence="1">Cell membrane</location>
        <topology evidence="1">Lipid-anchor</topology>
    </subcellularLocation>
    <text evidence="1">Associated with lipid rafts.</text>
</comment>
<comment type="PTM">
    <text evidence="1">Ubiquitinated by a CUL7-based E3 ligase, which leads to proteasomal degradation.</text>
</comment>
<comment type="PTM">
    <text evidence="1">Palmitoylation is required for membrane localization and protects TBC1D3 from ubiquitination.</text>
</comment>
<comment type="miscellaneous">
    <text evidence="4">TBC1D3 is encoded by a collection of very similar paralogs with multiple copies of each paralog, some human genomes encoding well over 50 copies depending on ethnic origin of the donor.</text>
</comment>
<reference key="1">
    <citation type="journal article" date="2009" name="Genes Cells">
        <title>Identification and characterization of a novel Tre-2/Bub2/Cdc16 (TBC) protein that possesses Rab3A-GAP activity.</title>
        <authorList>
            <person name="Ishibashi K."/>
            <person name="Kanno E."/>
            <person name="Itoh T."/>
            <person name="Fukuda M."/>
        </authorList>
    </citation>
    <scope>NUCLEOTIDE SEQUENCE [MRNA]</scope>
    <source>
        <tissue>Brain</tissue>
    </source>
</reference>
<reference key="2">
    <citation type="journal article" date="2006" name="Nature">
        <title>DNA sequence of human chromosome 17 and analysis of rearrangement in the human lineage.</title>
        <authorList>
            <person name="Zody M.C."/>
            <person name="Garber M."/>
            <person name="Adams D.J."/>
            <person name="Sharpe T."/>
            <person name="Harrow J."/>
            <person name="Lupski J.R."/>
            <person name="Nicholson C."/>
            <person name="Searle S.M."/>
            <person name="Wilming L."/>
            <person name="Young S.K."/>
            <person name="Abouelleil A."/>
            <person name="Allen N.R."/>
            <person name="Bi W."/>
            <person name="Bloom T."/>
            <person name="Borowsky M.L."/>
            <person name="Bugalter B.E."/>
            <person name="Butler J."/>
            <person name="Chang J.L."/>
            <person name="Chen C.-K."/>
            <person name="Cook A."/>
            <person name="Corum B."/>
            <person name="Cuomo C.A."/>
            <person name="de Jong P.J."/>
            <person name="DeCaprio D."/>
            <person name="Dewar K."/>
            <person name="FitzGerald M."/>
            <person name="Gilbert J."/>
            <person name="Gibson R."/>
            <person name="Gnerre S."/>
            <person name="Goldstein S."/>
            <person name="Grafham D.V."/>
            <person name="Grocock R."/>
            <person name="Hafez N."/>
            <person name="Hagopian D.S."/>
            <person name="Hart E."/>
            <person name="Norman C.H."/>
            <person name="Humphray S."/>
            <person name="Jaffe D.B."/>
            <person name="Jones M."/>
            <person name="Kamal M."/>
            <person name="Khodiyar V.K."/>
            <person name="LaButti K."/>
            <person name="Laird G."/>
            <person name="Lehoczky J."/>
            <person name="Liu X."/>
            <person name="Lokyitsang T."/>
            <person name="Loveland J."/>
            <person name="Lui A."/>
            <person name="Macdonald P."/>
            <person name="Major J.E."/>
            <person name="Matthews L."/>
            <person name="Mauceli E."/>
            <person name="McCarroll S.A."/>
            <person name="Mihalev A.H."/>
            <person name="Mudge J."/>
            <person name="Nguyen C."/>
            <person name="Nicol R."/>
            <person name="O'Leary S.B."/>
            <person name="Osoegawa K."/>
            <person name="Schwartz D.C."/>
            <person name="Shaw-Smith C."/>
            <person name="Stankiewicz P."/>
            <person name="Steward C."/>
            <person name="Swarbreck D."/>
            <person name="Venkataraman V."/>
            <person name="Whittaker C.A."/>
            <person name="Yang X."/>
            <person name="Zimmer A.R."/>
            <person name="Bradley A."/>
            <person name="Hubbard T."/>
            <person name="Birren B.W."/>
            <person name="Rogers J."/>
            <person name="Lander E.S."/>
            <person name="Nusbaum C."/>
        </authorList>
    </citation>
    <scope>NUCLEOTIDE SEQUENCE [LARGE SCALE GENOMIC DNA]</scope>
</reference>
<reference key="3">
    <citation type="journal article" date="2010" name="Science">
        <title>Diversity of human copy number variation and multicopy genes.</title>
        <authorList>
            <person name="Sudmant P.H."/>
            <person name="Kitzman J.O."/>
            <person name="Antonacci F."/>
            <person name="Alkan C."/>
            <person name="Malig M."/>
            <person name="Tsalenko A."/>
            <person name="Sampas N."/>
            <person name="Bruhn L."/>
            <person name="Shendure J."/>
            <person name="Eichler E.E."/>
        </authorList>
    </citation>
    <scope>MISCELLANEOUS</scope>
    <scope>COPY NUMBER VARIATION</scope>
</reference>
<accession>B9A6J9</accession>
<keyword id="KW-1003">Cell membrane</keyword>
<keyword id="KW-0343">GTPase activation</keyword>
<keyword id="KW-0449">Lipoprotein</keyword>
<keyword id="KW-0472">Membrane</keyword>
<keyword id="KW-0564">Palmitate</keyword>
<keyword id="KW-1185">Reference proteome</keyword>
<keyword id="KW-0832">Ubl conjugation</keyword>